<protein>
    <recommendedName>
        <fullName evidence="1">Holliday junction branch migration complex subunit RuvA</fullName>
    </recommendedName>
</protein>
<comment type="function">
    <text evidence="1">The RuvA-RuvB-RuvC complex processes Holliday junction (HJ) DNA during genetic recombination and DNA repair, while the RuvA-RuvB complex plays an important role in the rescue of blocked DNA replication forks via replication fork reversal (RFR). RuvA specifically binds to HJ cruciform DNA, conferring on it an open structure. The RuvB hexamer acts as an ATP-dependent pump, pulling dsDNA into and through the RuvAB complex. HJ branch migration allows RuvC to scan DNA until it finds its consensus sequence, where it cleaves and resolves the cruciform DNA.</text>
</comment>
<comment type="subunit">
    <text evidence="1">Homotetramer. Forms an RuvA(8)-RuvB(12)-Holliday junction (HJ) complex. HJ DNA is sandwiched between 2 RuvA tetramers; dsDNA enters through RuvA and exits via RuvB. An RuvB hexamer assembles on each DNA strand where it exits the tetramer. Each RuvB hexamer is contacted by two RuvA subunits (via domain III) on 2 adjacent RuvB subunits; this complex drives branch migration. In the full resolvosome a probable DNA-RuvA(4)-RuvB(12)-RuvC(2) complex forms which resolves the HJ.</text>
</comment>
<comment type="subcellular location">
    <subcellularLocation>
        <location evidence="1">Cytoplasm</location>
    </subcellularLocation>
</comment>
<comment type="domain">
    <text evidence="1">Has three domains with a flexible linker between the domains II and III and assumes an 'L' shape. Domain III is highly mobile and contacts RuvB.</text>
</comment>
<comment type="similarity">
    <text evidence="1">Belongs to the RuvA family.</text>
</comment>
<accession>Q8DAN4</accession>
<sequence>MIGRLRGILLEKQPPELLIEVNGIGYEVQMPMSCFYELPNIGEEAIIYTHFVVREDAQLLYGFNTVKERALFREVIKANGVGPKLGLAILSGMTASQFVASVEREDISTLVKLPGVGKKTAERLVVEMKDRLKGWSAGDLFTPFTDAAPVDSGSTSSNSAEEEAVSALLALGYKPVQASKVVSQIAKPDMTSEQLIREALKSMV</sequence>
<organism>
    <name type="scientific">Vibrio vulnificus (strain CMCP6)</name>
    <dbReference type="NCBI Taxonomy" id="216895"/>
    <lineage>
        <taxon>Bacteria</taxon>
        <taxon>Pseudomonadati</taxon>
        <taxon>Pseudomonadota</taxon>
        <taxon>Gammaproteobacteria</taxon>
        <taxon>Vibrionales</taxon>
        <taxon>Vibrionaceae</taxon>
        <taxon>Vibrio</taxon>
    </lineage>
</organism>
<gene>
    <name evidence="1" type="primary">ruvA</name>
    <name type="ordered locus">VV1_2159</name>
</gene>
<name>RUVA_VIBVU</name>
<proteinExistence type="inferred from homology"/>
<reference key="1">
    <citation type="submission" date="2002-12" db="EMBL/GenBank/DDBJ databases">
        <title>Complete genome sequence of Vibrio vulnificus CMCP6.</title>
        <authorList>
            <person name="Rhee J.H."/>
            <person name="Kim S.Y."/>
            <person name="Chung S.S."/>
            <person name="Kim J.J."/>
            <person name="Moon Y.H."/>
            <person name="Jeong H."/>
            <person name="Choy H.E."/>
        </authorList>
    </citation>
    <scope>NUCLEOTIDE SEQUENCE [LARGE SCALE GENOMIC DNA]</scope>
    <source>
        <strain>CMCP6</strain>
    </source>
</reference>
<dbReference type="EMBL" id="AE016795">
    <property type="protein sequence ID" value="AAO10544.1"/>
    <property type="molecule type" value="Genomic_DNA"/>
</dbReference>
<dbReference type="RefSeq" id="WP_011080038.1">
    <property type="nucleotide sequence ID" value="NC_004459.3"/>
</dbReference>
<dbReference type="SMR" id="Q8DAN4"/>
<dbReference type="KEGG" id="vvu:VV1_2159"/>
<dbReference type="HOGENOM" id="CLU_087936_0_0_6"/>
<dbReference type="Proteomes" id="UP000002275">
    <property type="component" value="Chromosome 1"/>
</dbReference>
<dbReference type="GO" id="GO:0005737">
    <property type="term" value="C:cytoplasm"/>
    <property type="evidence" value="ECO:0007669"/>
    <property type="project" value="UniProtKB-SubCell"/>
</dbReference>
<dbReference type="GO" id="GO:0009379">
    <property type="term" value="C:Holliday junction helicase complex"/>
    <property type="evidence" value="ECO:0007669"/>
    <property type="project" value="InterPro"/>
</dbReference>
<dbReference type="GO" id="GO:0048476">
    <property type="term" value="C:Holliday junction resolvase complex"/>
    <property type="evidence" value="ECO:0007669"/>
    <property type="project" value="UniProtKB-UniRule"/>
</dbReference>
<dbReference type="GO" id="GO:0005524">
    <property type="term" value="F:ATP binding"/>
    <property type="evidence" value="ECO:0007669"/>
    <property type="project" value="InterPro"/>
</dbReference>
<dbReference type="GO" id="GO:0000400">
    <property type="term" value="F:four-way junction DNA binding"/>
    <property type="evidence" value="ECO:0007669"/>
    <property type="project" value="UniProtKB-UniRule"/>
</dbReference>
<dbReference type="GO" id="GO:0009378">
    <property type="term" value="F:four-way junction helicase activity"/>
    <property type="evidence" value="ECO:0007669"/>
    <property type="project" value="InterPro"/>
</dbReference>
<dbReference type="GO" id="GO:0006310">
    <property type="term" value="P:DNA recombination"/>
    <property type="evidence" value="ECO:0007669"/>
    <property type="project" value="UniProtKB-UniRule"/>
</dbReference>
<dbReference type="GO" id="GO:0006281">
    <property type="term" value="P:DNA repair"/>
    <property type="evidence" value="ECO:0007669"/>
    <property type="project" value="UniProtKB-UniRule"/>
</dbReference>
<dbReference type="CDD" id="cd14332">
    <property type="entry name" value="UBA_RuvA_C"/>
    <property type="match status" value="1"/>
</dbReference>
<dbReference type="FunFam" id="1.10.150.20:FF:000012">
    <property type="entry name" value="Holliday junction ATP-dependent DNA helicase RuvA"/>
    <property type="match status" value="1"/>
</dbReference>
<dbReference type="FunFam" id="1.10.8.10:FF:000008">
    <property type="entry name" value="Holliday junction ATP-dependent DNA helicase RuvA"/>
    <property type="match status" value="1"/>
</dbReference>
<dbReference type="FunFam" id="2.40.50.140:FF:000083">
    <property type="entry name" value="Holliday junction ATP-dependent DNA helicase RuvA"/>
    <property type="match status" value="1"/>
</dbReference>
<dbReference type="Gene3D" id="1.10.150.20">
    <property type="entry name" value="5' to 3' exonuclease, C-terminal subdomain"/>
    <property type="match status" value="1"/>
</dbReference>
<dbReference type="Gene3D" id="1.10.8.10">
    <property type="entry name" value="DNA helicase RuvA subunit, C-terminal domain"/>
    <property type="match status" value="1"/>
</dbReference>
<dbReference type="Gene3D" id="2.40.50.140">
    <property type="entry name" value="Nucleic acid-binding proteins"/>
    <property type="match status" value="1"/>
</dbReference>
<dbReference type="HAMAP" id="MF_00031">
    <property type="entry name" value="DNA_HJ_migration_RuvA"/>
    <property type="match status" value="1"/>
</dbReference>
<dbReference type="InterPro" id="IPR013849">
    <property type="entry name" value="DNA_helicase_Holl-junc_RuvA_I"/>
</dbReference>
<dbReference type="InterPro" id="IPR003583">
    <property type="entry name" value="Hlx-hairpin-Hlx_DNA-bd_motif"/>
</dbReference>
<dbReference type="InterPro" id="IPR012340">
    <property type="entry name" value="NA-bd_OB-fold"/>
</dbReference>
<dbReference type="InterPro" id="IPR000085">
    <property type="entry name" value="RuvA"/>
</dbReference>
<dbReference type="InterPro" id="IPR010994">
    <property type="entry name" value="RuvA_2-like"/>
</dbReference>
<dbReference type="InterPro" id="IPR011114">
    <property type="entry name" value="RuvA_C"/>
</dbReference>
<dbReference type="InterPro" id="IPR036267">
    <property type="entry name" value="RuvA_C_sf"/>
</dbReference>
<dbReference type="NCBIfam" id="TIGR00084">
    <property type="entry name" value="ruvA"/>
    <property type="match status" value="1"/>
</dbReference>
<dbReference type="Pfam" id="PF14520">
    <property type="entry name" value="HHH_5"/>
    <property type="match status" value="1"/>
</dbReference>
<dbReference type="Pfam" id="PF07499">
    <property type="entry name" value="RuvA_C"/>
    <property type="match status" value="1"/>
</dbReference>
<dbReference type="Pfam" id="PF01330">
    <property type="entry name" value="RuvA_N"/>
    <property type="match status" value="1"/>
</dbReference>
<dbReference type="SMART" id="SM00278">
    <property type="entry name" value="HhH1"/>
    <property type="match status" value="2"/>
</dbReference>
<dbReference type="SUPFAM" id="SSF46929">
    <property type="entry name" value="DNA helicase RuvA subunit, C-terminal domain"/>
    <property type="match status" value="1"/>
</dbReference>
<dbReference type="SUPFAM" id="SSF50249">
    <property type="entry name" value="Nucleic acid-binding proteins"/>
    <property type="match status" value="1"/>
</dbReference>
<dbReference type="SUPFAM" id="SSF47781">
    <property type="entry name" value="RuvA domain 2-like"/>
    <property type="match status" value="1"/>
</dbReference>
<feature type="chain" id="PRO_0000094709" description="Holliday junction branch migration complex subunit RuvA">
    <location>
        <begin position="1"/>
        <end position="204"/>
    </location>
</feature>
<feature type="region of interest" description="Domain I" evidence="1">
    <location>
        <begin position="1"/>
        <end position="64"/>
    </location>
</feature>
<feature type="region of interest" description="Domain II" evidence="1">
    <location>
        <begin position="65"/>
        <end position="143"/>
    </location>
</feature>
<feature type="region of interest" description="Flexible linker" evidence="1">
    <location>
        <begin position="144"/>
        <end position="155"/>
    </location>
</feature>
<feature type="region of interest" description="Domain III" evidence="1">
    <location>
        <begin position="156"/>
        <end position="204"/>
    </location>
</feature>
<keyword id="KW-0963">Cytoplasm</keyword>
<keyword id="KW-0227">DNA damage</keyword>
<keyword id="KW-0233">DNA recombination</keyword>
<keyword id="KW-0234">DNA repair</keyword>
<keyword id="KW-0238">DNA-binding</keyword>
<evidence type="ECO:0000255" key="1">
    <source>
        <dbReference type="HAMAP-Rule" id="MF_00031"/>
    </source>
</evidence>